<feature type="chain" id="PRO_1000190474" description="HTH-type transcriptional regulator UlaR">
    <location>
        <begin position="1"/>
        <end position="251"/>
    </location>
</feature>
<feature type="domain" description="HTH deoR-type" evidence="1">
    <location>
        <begin position="3"/>
        <end position="58"/>
    </location>
</feature>
<feature type="DNA-binding region" description="H-T-H motif" evidence="1">
    <location>
        <begin position="20"/>
        <end position="39"/>
    </location>
</feature>
<name>ULAR_SALHS</name>
<proteinExistence type="inferred from homology"/>
<keyword id="KW-0963">Cytoplasm</keyword>
<keyword id="KW-0238">DNA-binding</keyword>
<keyword id="KW-0678">Repressor</keyword>
<keyword id="KW-0804">Transcription</keyword>
<keyword id="KW-0805">Transcription regulation</keyword>
<organism>
    <name type="scientific">Salmonella heidelberg (strain SL476)</name>
    <dbReference type="NCBI Taxonomy" id="454169"/>
    <lineage>
        <taxon>Bacteria</taxon>
        <taxon>Pseudomonadati</taxon>
        <taxon>Pseudomonadota</taxon>
        <taxon>Gammaproteobacteria</taxon>
        <taxon>Enterobacterales</taxon>
        <taxon>Enterobacteriaceae</taxon>
        <taxon>Salmonella</taxon>
    </lineage>
</organism>
<gene>
    <name evidence="1" type="primary">ulaR</name>
    <name type="ordered locus">SeHA_C4799</name>
</gene>
<accession>B4TFC5</accession>
<comment type="function">
    <text evidence="1">Represses ulaG and the ulaABCDEF operon.</text>
</comment>
<comment type="subcellular location">
    <subcellularLocation>
        <location evidence="1">Cytoplasm</location>
    </subcellularLocation>
</comment>
<sequence>MTEAQRHQILLDMLAQLGFVTVENVIERLGISPATARRDINKLDESGKLKKVRNGAEAITQQRPRWTPMNLHQAQNHDEKVRIAKAASQLVNPGESVVINCGSTAFLLGREMCGKPVQIITNYLPLANYLIDQEHDSVIIMGGQYNKSQSITLSPQGSENSLYAGHWMFTSGKGLTADGLYKTDMLTAMAEQKMLSVVGKLVALVDSSKIGERAGMLFSRADQIAMLITGKNANPQVLQQLEAQGVSILRV</sequence>
<reference key="1">
    <citation type="journal article" date="2011" name="J. Bacteriol.">
        <title>Comparative genomics of 28 Salmonella enterica isolates: evidence for CRISPR-mediated adaptive sublineage evolution.</title>
        <authorList>
            <person name="Fricke W.F."/>
            <person name="Mammel M.K."/>
            <person name="McDermott P.F."/>
            <person name="Tartera C."/>
            <person name="White D.G."/>
            <person name="Leclerc J.E."/>
            <person name="Ravel J."/>
            <person name="Cebula T.A."/>
        </authorList>
    </citation>
    <scope>NUCLEOTIDE SEQUENCE [LARGE SCALE GENOMIC DNA]</scope>
    <source>
        <strain>SL476</strain>
    </source>
</reference>
<evidence type="ECO:0000255" key="1">
    <source>
        <dbReference type="HAMAP-Rule" id="MF_01563"/>
    </source>
</evidence>
<dbReference type="EMBL" id="CP001120">
    <property type="protein sequence ID" value="ACF68444.1"/>
    <property type="molecule type" value="Genomic_DNA"/>
</dbReference>
<dbReference type="RefSeq" id="WP_000133618.1">
    <property type="nucleotide sequence ID" value="NC_011083.1"/>
</dbReference>
<dbReference type="SMR" id="B4TFC5"/>
<dbReference type="KEGG" id="seh:SeHA_C4799"/>
<dbReference type="HOGENOM" id="CLU_060699_3_2_6"/>
<dbReference type="Proteomes" id="UP000001866">
    <property type="component" value="Chromosome"/>
</dbReference>
<dbReference type="GO" id="GO:0005737">
    <property type="term" value="C:cytoplasm"/>
    <property type="evidence" value="ECO:0007669"/>
    <property type="project" value="UniProtKB-SubCell"/>
</dbReference>
<dbReference type="GO" id="GO:0003677">
    <property type="term" value="F:DNA binding"/>
    <property type="evidence" value="ECO:0007669"/>
    <property type="project" value="UniProtKB-KW"/>
</dbReference>
<dbReference type="GO" id="GO:0003700">
    <property type="term" value="F:DNA-binding transcription factor activity"/>
    <property type="evidence" value="ECO:0007669"/>
    <property type="project" value="InterPro"/>
</dbReference>
<dbReference type="GO" id="GO:0045892">
    <property type="term" value="P:negative regulation of DNA-templated transcription"/>
    <property type="evidence" value="ECO:0007669"/>
    <property type="project" value="UniProtKB-UniRule"/>
</dbReference>
<dbReference type="FunFam" id="1.10.10.10:FF:000160">
    <property type="entry name" value="HTH-type transcriptional regulator UlaR"/>
    <property type="match status" value="1"/>
</dbReference>
<dbReference type="Gene3D" id="1.10.10.10">
    <property type="entry name" value="Winged helix-like DNA-binding domain superfamily/Winged helix DNA-binding domain"/>
    <property type="match status" value="1"/>
</dbReference>
<dbReference type="HAMAP" id="MF_01563">
    <property type="entry name" value="HTH_type_UlaR"/>
    <property type="match status" value="1"/>
</dbReference>
<dbReference type="InterPro" id="IPR050313">
    <property type="entry name" value="Carb_Metab_HTH_regulators"/>
</dbReference>
<dbReference type="InterPro" id="IPR014036">
    <property type="entry name" value="DeoR-like_C"/>
</dbReference>
<dbReference type="InterPro" id="IPR001034">
    <property type="entry name" value="DeoR_HTH"/>
</dbReference>
<dbReference type="InterPro" id="IPR037171">
    <property type="entry name" value="NagB/RpiA_transferase-like"/>
</dbReference>
<dbReference type="InterPro" id="IPR018356">
    <property type="entry name" value="Tscrpt_reg_HTH_DeoR_CS"/>
</dbReference>
<dbReference type="InterPro" id="IPR023711">
    <property type="entry name" value="Tscrpt_reg_HTH_UlaR"/>
</dbReference>
<dbReference type="InterPro" id="IPR036388">
    <property type="entry name" value="WH-like_DNA-bd_sf"/>
</dbReference>
<dbReference type="InterPro" id="IPR036390">
    <property type="entry name" value="WH_DNA-bd_sf"/>
</dbReference>
<dbReference type="NCBIfam" id="NF010034">
    <property type="entry name" value="PRK13509.1"/>
    <property type="match status" value="1"/>
</dbReference>
<dbReference type="PANTHER" id="PTHR30363">
    <property type="entry name" value="HTH-TYPE TRANSCRIPTIONAL REGULATOR SRLR-RELATED"/>
    <property type="match status" value="1"/>
</dbReference>
<dbReference type="PANTHER" id="PTHR30363:SF55">
    <property type="entry name" value="HTH-TYPE TRANSCRIPTIONAL REGULATOR ULAR"/>
    <property type="match status" value="1"/>
</dbReference>
<dbReference type="Pfam" id="PF00455">
    <property type="entry name" value="DeoRC"/>
    <property type="match status" value="1"/>
</dbReference>
<dbReference type="Pfam" id="PF08220">
    <property type="entry name" value="HTH_DeoR"/>
    <property type="match status" value="1"/>
</dbReference>
<dbReference type="PRINTS" id="PR00037">
    <property type="entry name" value="HTHLACR"/>
</dbReference>
<dbReference type="SMART" id="SM01134">
    <property type="entry name" value="DeoRC"/>
    <property type="match status" value="1"/>
</dbReference>
<dbReference type="SMART" id="SM00420">
    <property type="entry name" value="HTH_DEOR"/>
    <property type="match status" value="1"/>
</dbReference>
<dbReference type="SUPFAM" id="SSF100950">
    <property type="entry name" value="NagB/RpiA/CoA transferase-like"/>
    <property type="match status" value="1"/>
</dbReference>
<dbReference type="SUPFAM" id="SSF46785">
    <property type="entry name" value="Winged helix' DNA-binding domain"/>
    <property type="match status" value="1"/>
</dbReference>
<dbReference type="PROSITE" id="PS00894">
    <property type="entry name" value="HTH_DEOR_1"/>
    <property type="match status" value="1"/>
</dbReference>
<dbReference type="PROSITE" id="PS51000">
    <property type="entry name" value="HTH_DEOR_2"/>
    <property type="match status" value="1"/>
</dbReference>
<protein>
    <recommendedName>
        <fullName evidence="1">HTH-type transcriptional regulator UlaR</fullName>
    </recommendedName>
</protein>